<feature type="chain" id="PRO_0000368689" description="ATP synthase subunit b">
    <location>
        <begin position="1"/>
        <end position="156"/>
    </location>
</feature>
<feature type="transmembrane region" description="Helical" evidence="1">
    <location>
        <begin position="12"/>
        <end position="32"/>
    </location>
</feature>
<accession>A5WBA7</accession>
<dbReference type="EMBL" id="CP000712">
    <property type="protein sequence ID" value="ABQ81417.1"/>
    <property type="molecule type" value="Genomic_DNA"/>
</dbReference>
<dbReference type="SMR" id="A5WBA7"/>
<dbReference type="KEGG" id="ppf:Pput_5299"/>
<dbReference type="eggNOG" id="COG0711">
    <property type="taxonomic scope" value="Bacteria"/>
</dbReference>
<dbReference type="HOGENOM" id="CLU_079215_4_5_6"/>
<dbReference type="GO" id="GO:0005886">
    <property type="term" value="C:plasma membrane"/>
    <property type="evidence" value="ECO:0007669"/>
    <property type="project" value="UniProtKB-SubCell"/>
</dbReference>
<dbReference type="GO" id="GO:0045259">
    <property type="term" value="C:proton-transporting ATP synthase complex"/>
    <property type="evidence" value="ECO:0007669"/>
    <property type="project" value="UniProtKB-KW"/>
</dbReference>
<dbReference type="GO" id="GO:0046933">
    <property type="term" value="F:proton-transporting ATP synthase activity, rotational mechanism"/>
    <property type="evidence" value="ECO:0007669"/>
    <property type="project" value="UniProtKB-UniRule"/>
</dbReference>
<dbReference type="GO" id="GO:0046961">
    <property type="term" value="F:proton-transporting ATPase activity, rotational mechanism"/>
    <property type="evidence" value="ECO:0007669"/>
    <property type="project" value="TreeGrafter"/>
</dbReference>
<dbReference type="CDD" id="cd06503">
    <property type="entry name" value="ATP-synt_Fo_b"/>
    <property type="match status" value="1"/>
</dbReference>
<dbReference type="Gene3D" id="6.10.250.1580">
    <property type="match status" value="1"/>
</dbReference>
<dbReference type="HAMAP" id="MF_01398">
    <property type="entry name" value="ATP_synth_b_bprime"/>
    <property type="match status" value="1"/>
</dbReference>
<dbReference type="InterPro" id="IPR028987">
    <property type="entry name" value="ATP_synth_B-like_membr_sf"/>
</dbReference>
<dbReference type="InterPro" id="IPR002146">
    <property type="entry name" value="ATP_synth_b/b'su_bac/chlpt"/>
</dbReference>
<dbReference type="InterPro" id="IPR005864">
    <property type="entry name" value="ATP_synth_F0_bsu_bac"/>
</dbReference>
<dbReference type="InterPro" id="IPR050059">
    <property type="entry name" value="ATP_synthase_B_chain"/>
</dbReference>
<dbReference type="NCBIfam" id="TIGR01144">
    <property type="entry name" value="ATP_synt_b"/>
    <property type="match status" value="1"/>
</dbReference>
<dbReference type="NCBIfam" id="NF004411">
    <property type="entry name" value="PRK05759.1-2"/>
    <property type="match status" value="1"/>
</dbReference>
<dbReference type="NCBIfam" id="NF004413">
    <property type="entry name" value="PRK05759.1-4"/>
    <property type="match status" value="1"/>
</dbReference>
<dbReference type="PANTHER" id="PTHR33445:SF1">
    <property type="entry name" value="ATP SYNTHASE SUBUNIT B"/>
    <property type="match status" value="1"/>
</dbReference>
<dbReference type="PANTHER" id="PTHR33445">
    <property type="entry name" value="ATP SYNTHASE SUBUNIT B', CHLOROPLASTIC"/>
    <property type="match status" value="1"/>
</dbReference>
<dbReference type="Pfam" id="PF00430">
    <property type="entry name" value="ATP-synt_B"/>
    <property type="match status" value="1"/>
</dbReference>
<dbReference type="SUPFAM" id="SSF81573">
    <property type="entry name" value="F1F0 ATP synthase subunit B, membrane domain"/>
    <property type="match status" value="1"/>
</dbReference>
<comment type="function">
    <text evidence="1">F(1)F(0) ATP synthase produces ATP from ADP in the presence of a proton or sodium gradient. F-type ATPases consist of two structural domains, F(1) containing the extramembraneous catalytic core and F(0) containing the membrane proton channel, linked together by a central stalk and a peripheral stalk. During catalysis, ATP synthesis in the catalytic domain of F(1) is coupled via a rotary mechanism of the central stalk subunits to proton translocation.</text>
</comment>
<comment type="function">
    <text evidence="1">Component of the F(0) channel, it forms part of the peripheral stalk, linking F(1) to F(0).</text>
</comment>
<comment type="subunit">
    <text evidence="1">F-type ATPases have 2 components, F(1) - the catalytic core - and F(0) - the membrane proton channel. F(1) has five subunits: alpha(3), beta(3), gamma(1), delta(1), epsilon(1). F(0) has three main subunits: a(1), b(2) and c(10-14). The alpha and beta chains form an alternating ring which encloses part of the gamma chain. F(1) is attached to F(0) by a central stalk formed by the gamma and epsilon chains, while a peripheral stalk is formed by the delta and b chains.</text>
</comment>
<comment type="subcellular location">
    <subcellularLocation>
        <location evidence="1">Cell inner membrane</location>
        <topology evidence="1">Single-pass membrane protein</topology>
    </subcellularLocation>
</comment>
<comment type="similarity">
    <text evidence="1">Belongs to the ATPase B chain family.</text>
</comment>
<keyword id="KW-0066">ATP synthesis</keyword>
<keyword id="KW-0997">Cell inner membrane</keyword>
<keyword id="KW-1003">Cell membrane</keyword>
<keyword id="KW-0138">CF(0)</keyword>
<keyword id="KW-0375">Hydrogen ion transport</keyword>
<keyword id="KW-0406">Ion transport</keyword>
<keyword id="KW-0472">Membrane</keyword>
<keyword id="KW-0812">Transmembrane</keyword>
<keyword id="KW-1133">Transmembrane helix</keyword>
<keyword id="KW-0813">Transport</keyword>
<sequence length="156" mass="16912">MNINATLIGQSVAFLIFVLFCMKYVWPPVITALQERQKKIADGLDAANRAARDLELAQEKAGQQLREAKAQAAEIIEQSKKRAAQLVEEAREQARVEADRVKAQALAEIEQELNSAKDALRAQVGALAVGGAEKILGATIDQNAHAELVNKLAAEI</sequence>
<evidence type="ECO:0000255" key="1">
    <source>
        <dbReference type="HAMAP-Rule" id="MF_01398"/>
    </source>
</evidence>
<organism>
    <name type="scientific">Pseudomonas putida (strain ATCC 700007 / DSM 6899 / JCM 31910 / BCRC 17059 / LMG 24140 / F1)</name>
    <dbReference type="NCBI Taxonomy" id="351746"/>
    <lineage>
        <taxon>Bacteria</taxon>
        <taxon>Pseudomonadati</taxon>
        <taxon>Pseudomonadota</taxon>
        <taxon>Gammaproteobacteria</taxon>
        <taxon>Pseudomonadales</taxon>
        <taxon>Pseudomonadaceae</taxon>
        <taxon>Pseudomonas</taxon>
    </lineage>
</organism>
<reference key="1">
    <citation type="submission" date="2007-05" db="EMBL/GenBank/DDBJ databases">
        <title>Complete sequence of Pseudomonas putida F1.</title>
        <authorList>
            <consortium name="US DOE Joint Genome Institute"/>
            <person name="Copeland A."/>
            <person name="Lucas S."/>
            <person name="Lapidus A."/>
            <person name="Barry K."/>
            <person name="Detter J.C."/>
            <person name="Glavina del Rio T."/>
            <person name="Hammon N."/>
            <person name="Israni S."/>
            <person name="Dalin E."/>
            <person name="Tice H."/>
            <person name="Pitluck S."/>
            <person name="Chain P."/>
            <person name="Malfatti S."/>
            <person name="Shin M."/>
            <person name="Vergez L."/>
            <person name="Schmutz J."/>
            <person name="Larimer F."/>
            <person name="Land M."/>
            <person name="Hauser L."/>
            <person name="Kyrpides N."/>
            <person name="Lykidis A."/>
            <person name="Parales R."/>
            <person name="Richardson P."/>
        </authorList>
    </citation>
    <scope>NUCLEOTIDE SEQUENCE [LARGE SCALE GENOMIC DNA]</scope>
    <source>
        <strain>ATCC 700007 / DSM 6899 / JCM 31910 / BCRC 17059 / LMG 24140 / F1</strain>
    </source>
</reference>
<gene>
    <name evidence="1" type="primary">atpF</name>
    <name type="ordered locus">Pput_5299</name>
</gene>
<name>ATPF_PSEP1</name>
<proteinExistence type="inferred from homology"/>
<protein>
    <recommendedName>
        <fullName evidence="1">ATP synthase subunit b</fullName>
    </recommendedName>
    <alternativeName>
        <fullName evidence="1">ATP synthase F(0) sector subunit b</fullName>
    </alternativeName>
    <alternativeName>
        <fullName evidence="1">ATPase subunit I</fullName>
    </alternativeName>
    <alternativeName>
        <fullName evidence="1">F-type ATPase subunit b</fullName>
        <shortName evidence="1">F-ATPase subunit b</shortName>
    </alternativeName>
</protein>